<sequence length="403" mass="43533">MHGFHDVFIQILLLLAISVSVIAIAKLLKEPDSIALVLVGLVLGLTELPIIEDAERYITQSEVFQATIISLFLPILLGDATLKLPFHHLFSQKKTVLGLAFVGTFVSSICIGTAAYFLLDLPLAVAFTFAALMSATDPISVLSIFKSLGVPQKMSTVMEGESLFNDGIAVVLFKIASIYLLTYMEMGWAGLGSGVFLFLKFAIGGALVGLVLGYFFSQVIRVFDDYPLEVAFSALLFFGSYFIAEHFHTSGVIAVVVGGFVFGDYGAKIGMSKETKTNINTFWDSVTLIANALIFLMVGLEIRNIDLAGNWGVIVGAILIVLVGRTIAVYLGTGWVQELSSKERLLINWGGLRGSLSVALALSLPMDFAGRDQVLLLTFSVVLFSLIVQGLTLKPLIKKLGMI</sequence>
<keyword id="KW-0050">Antiport</keyword>
<keyword id="KW-1003">Cell membrane</keyword>
<keyword id="KW-0406">Ion transport</keyword>
<keyword id="KW-0472">Membrane</keyword>
<keyword id="KW-0915">Sodium</keyword>
<keyword id="KW-0739">Sodium transport</keyword>
<keyword id="KW-0812">Transmembrane</keyword>
<keyword id="KW-1133">Transmembrane helix</keyword>
<keyword id="KW-0813">Transport</keyword>
<comment type="function">
    <text evidence="2 3">Na(+)/H(+) antiporter that extrudes sodium in exchange for external protons. Can also transport lithium.</text>
</comment>
<comment type="biophysicochemical properties">
    <kinetics>
        <KM evidence="2">0.83 mM for sodium</KM>
        <KM evidence="2">2.14 mM for lithium</KM>
    </kinetics>
    <phDependence>
        <text evidence="2">Optimum pH is 8.5-9.0 for sodium transport and 8.5 for lithium transport. Na(+)/H(+) antiporter activity is detected between pH 6.5 and 9.5, whereas Li(+)/H(+) antiporter activity is detected only above pH 7.5.</text>
    </phDependence>
</comment>
<comment type="subcellular location">
    <subcellularLocation>
        <location evidence="2 3">Cell membrane</location>
        <topology evidence="2 3">Multi-pass membrane protein</topology>
    </subcellularLocation>
</comment>
<comment type="similarity">
    <text evidence="4">Belongs to the monovalent cation:proton antiporter 1 (CPA1) transporter (TC 2.A.36) family.</text>
</comment>
<name>NHAH_HALDA</name>
<gene>
    <name type="primary">nhaH</name>
</gene>
<proteinExistence type="evidence at protein level"/>
<accession>Q2XWL3</accession>
<reference key="1">
    <citation type="journal article" date="2006" name="FEMS Microbiol. Lett.">
        <title>A Na+/H+ antiporter gene of the moderately halophilic bacterium Halobacillus dabanensis D-8T: cloning and molecular characterization.</title>
        <authorList>
            <person name="Yang L.F."/>
            <person name="Jiang J.Q."/>
            <person name="Zhao B.S."/>
            <person name="Zhang B."/>
            <person name="Feng D.Q."/>
            <person name="Lu W.D."/>
            <person name="Wang L."/>
            <person name="Yang S.S."/>
        </authorList>
    </citation>
    <scope>NUCLEOTIDE SEQUENCE [GENOMIC DNA]</scope>
    <scope>FUNCTION</scope>
    <scope>BIOPHYSICOCHEMICAL PROPERTIES</scope>
    <scope>SUBCELLULAR LOCATION</scope>
    <source>
        <strain>DSM 18199 / CIP 109012 / JCM 12772 / D-8</strain>
    </source>
</reference>
<reference key="2">
    <citation type="journal article" date="2013" name="Biochim. Biophys. Acta">
        <title>Identification of important charged residues for alkali cation exchange or pH regulation of NhaH, a Na(+)/H(+) antiporter of Halobacillus dabanensis.</title>
        <authorList>
            <person name="Jiang J."/>
            <person name="Wang L."/>
            <person name="Zou Y."/>
            <person name="Lu W."/>
            <person name="Zhao B."/>
            <person name="Zhang B."/>
            <person name="Yang S."/>
            <person name="Yang L."/>
        </authorList>
    </citation>
    <scope>FUNCTION</scope>
    <scope>SUBCELLULAR LOCATION</scope>
    <scope>MUTAGENESIS OF HIS-87; HIS-88; ASP-137; GLU-161; ASP-166; ASP-224; GLU-229 AND ARG-325</scope>
    <source>
        <strain>DSM 18199 / CIP 109012 / JCM 12772 / D-8</strain>
    </source>
</reference>
<protein>
    <recommendedName>
        <fullName>Na(+)/H(+) antiporter NhaH</fullName>
    </recommendedName>
    <alternativeName>
        <fullName>Sodium/proton antiporter NhaH</fullName>
    </alternativeName>
</protein>
<organism>
    <name type="scientific">Halobacillus dabanensis</name>
    <dbReference type="NCBI Taxonomy" id="240302"/>
    <lineage>
        <taxon>Bacteria</taxon>
        <taxon>Bacillati</taxon>
        <taxon>Bacillota</taxon>
        <taxon>Bacilli</taxon>
        <taxon>Bacillales</taxon>
        <taxon>Bacillaceae</taxon>
        <taxon>Halobacillus</taxon>
    </lineage>
</organism>
<dbReference type="EMBL" id="DQ167194">
    <property type="protein sequence ID" value="ABA03152.1"/>
    <property type="molecule type" value="Genomic_DNA"/>
</dbReference>
<dbReference type="RefSeq" id="WP_075036418.1">
    <property type="nucleotide sequence ID" value="NZ_FOSB01000005.1"/>
</dbReference>
<dbReference type="SMR" id="Q2XWL3"/>
<dbReference type="STRING" id="240302.BN982_02296"/>
<dbReference type="TCDB" id="2.A.36.6.7">
    <property type="family name" value="the monovalent cation:proton antiporter-1 (cpa1) family"/>
</dbReference>
<dbReference type="eggNOG" id="COG0025">
    <property type="taxonomic scope" value="Bacteria"/>
</dbReference>
<dbReference type="OrthoDB" id="154752at2"/>
<dbReference type="GO" id="GO:0005886">
    <property type="term" value="C:plasma membrane"/>
    <property type="evidence" value="ECO:0007669"/>
    <property type="project" value="UniProtKB-SubCell"/>
</dbReference>
<dbReference type="GO" id="GO:0015386">
    <property type="term" value="F:potassium:proton antiporter activity"/>
    <property type="evidence" value="ECO:0007669"/>
    <property type="project" value="TreeGrafter"/>
</dbReference>
<dbReference type="GO" id="GO:0015385">
    <property type="term" value="F:sodium:proton antiporter activity"/>
    <property type="evidence" value="ECO:0007669"/>
    <property type="project" value="InterPro"/>
</dbReference>
<dbReference type="GO" id="GO:0051453">
    <property type="term" value="P:regulation of intracellular pH"/>
    <property type="evidence" value="ECO:0007669"/>
    <property type="project" value="TreeGrafter"/>
</dbReference>
<dbReference type="GO" id="GO:0098719">
    <property type="term" value="P:sodium ion import across plasma membrane"/>
    <property type="evidence" value="ECO:0007669"/>
    <property type="project" value="TreeGrafter"/>
</dbReference>
<dbReference type="Gene3D" id="6.10.140.1330">
    <property type="match status" value="1"/>
</dbReference>
<dbReference type="InterPro" id="IPR018422">
    <property type="entry name" value="Cation/H_exchanger_CPA1"/>
</dbReference>
<dbReference type="InterPro" id="IPR006153">
    <property type="entry name" value="Cation/H_exchanger_TM"/>
</dbReference>
<dbReference type="PANTHER" id="PTHR10110:SF195">
    <property type="entry name" value="NA(+)_H(+) ANTIPORTER NHAS2"/>
    <property type="match status" value="1"/>
</dbReference>
<dbReference type="PANTHER" id="PTHR10110">
    <property type="entry name" value="SODIUM/HYDROGEN EXCHANGER"/>
    <property type="match status" value="1"/>
</dbReference>
<dbReference type="Pfam" id="PF00999">
    <property type="entry name" value="Na_H_Exchanger"/>
    <property type="match status" value="1"/>
</dbReference>
<feature type="chain" id="PRO_0000423859" description="Na(+)/H(+) antiporter NhaH">
    <location>
        <begin position="1"/>
        <end position="403"/>
    </location>
</feature>
<feature type="topological domain" description="Cytoplasmic" evidence="1">
    <location>
        <begin position="1"/>
        <end position="6"/>
    </location>
</feature>
<feature type="transmembrane region" description="Helical" evidence="1">
    <location>
        <begin position="7"/>
        <end position="27"/>
    </location>
</feature>
<feature type="topological domain" description="Extracellular" evidence="1">
    <location>
        <begin position="28"/>
        <end position="30"/>
    </location>
</feature>
<feature type="transmembrane region" description="Helical" evidence="1">
    <location>
        <begin position="31"/>
        <end position="51"/>
    </location>
</feature>
<feature type="topological domain" description="Cytoplasmic" evidence="1">
    <location>
        <begin position="52"/>
        <end position="65"/>
    </location>
</feature>
<feature type="transmembrane region" description="Helical" evidence="1">
    <location>
        <begin position="66"/>
        <end position="86"/>
    </location>
</feature>
<feature type="topological domain" description="Extracellular" evidence="1">
    <location>
        <begin position="87"/>
        <end position="98"/>
    </location>
</feature>
<feature type="transmembrane region" description="Helical" evidence="1">
    <location>
        <begin position="99"/>
        <end position="119"/>
    </location>
</feature>
<feature type="topological domain" description="Cytoplasmic" evidence="1">
    <location>
        <begin position="120"/>
        <end position="124"/>
    </location>
</feature>
<feature type="transmembrane region" description="Helical" evidence="1">
    <location>
        <begin position="125"/>
        <end position="145"/>
    </location>
</feature>
<feature type="topological domain" description="Extracellular" evidence="1">
    <location>
        <begin position="146"/>
        <end position="167"/>
    </location>
</feature>
<feature type="transmembrane region" description="Helical" evidence="1">
    <location>
        <begin position="168"/>
        <end position="188"/>
    </location>
</feature>
<feature type="topological domain" description="Cytoplasmic" evidence="1">
    <location>
        <begin position="189"/>
        <end position="195"/>
    </location>
</feature>
<feature type="transmembrane region" description="Helical" evidence="1">
    <location>
        <begin position="196"/>
        <end position="216"/>
    </location>
</feature>
<feature type="topological domain" description="Extracellular" evidence="1">
    <location>
        <begin position="217"/>
        <end position="218"/>
    </location>
</feature>
<feature type="transmembrane region" description="Helical" evidence="1">
    <location>
        <begin position="219"/>
        <end position="239"/>
    </location>
</feature>
<feature type="topological domain" description="Cytoplasmic" evidence="1">
    <location>
        <begin position="240"/>
        <end position="241"/>
    </location>
</feature>
<feature type="transmembrane region" description="Helical" evidence="1">
    <location>
        <begin position="242"/>
        <end position="262"/>
    </location>
</feature>
<feature type="topological domain" description="Extracellular" evidence="1">
    <location>
        <begin position="263"/>
        <end position="281"/>
    </location>
</feature>
<feature type="transmembrane region" description="Helical" evidence="1">
    <location>
        <begin position="282"/>
        <end position="302"/>
    </location>
</feature>
<feature type="topological domain" description="Cytoplasmic" evidence="1">
    <location>
        <begin position="303"/>
        <end position="310"/>
    </location>
</feature>
<feature type="transmembrane region" description="Helical" evidence="1">
    <location>
        <begin position="311"/>
        <end position="331"/>
    </location>
</feature>
<feature type="topological domain" description="Extracellular" evidence="1">
    <location>
        <begin position="332"/>
        <end position="372"/>
    </location>
</feature>
<feature type="transmembrane region" description="Helical" evidence="1">
    <location>
        <begin position="373"/>
        <end position="393"/>
    </location>
</feature>
<feature type="topological domain" description="Cytoplasmic" evidence="1">
    <location>
        <begin position="394"/>
        <end position="403"/>
    </location>
</feature>
<feature type="mutagenesis site" description="Causes acidic shift of pH profile." evidence="3">
    <original>H</original>
    <variation>A</variation>
    <location>
        <position position="87"/>
    </location>
</feature>
<feature type="mutagenesis site" description="Causes acidic shift of pH profile." evidence="3">
    <original>H</original>
    <variation>A</variation>
    <location>
        <position position="88"/>
    </location>
</feature>
<feature type="mutagenesis site" description="Lack of activity." evidence="3">
    <original>D</original>
    <variation>A</variation>
    <location>
        <position position="137"/>
    </location>
</feature>
<feature type="mutagenesis site" description="Decreases activity. Increases Km for Na(+) and Li(+), but does not affect pH profile." evidence="3">
    <original>D</original>
    <variation>E</variation>
    <location>
        <position position="137"/>
    </location>
</feature>
<feature type="mutagenesis site" description="Decreases activity. Increases Km for Na(+) and Li(+)." evidence="3">
    <original>E</original>
    <variation>N</variation>
    <location>
        <position position="161"/>
    </location>
</feature>
<feature type="mutagenesis site" description="Lack of activity." evidence="3">
    <original>D</original>
    <variation>A</variation>
    <location>
        <position position="166"/>
    </location>
</feature>
<feature type="mutagenesis site" description="Decreases activity. Increases Km for Na(+) and Li(+), and causes alkaline shift of pH profile." evidence="3">
    <original>D</original>
    <variation>E</variation>
    <location>
        <position position="166"/>
    </location>
</feature>
<feature type="mutagenesis site" description="Decreases activity. Increases Km for Na(+) and Li(+)." evidence="3">
    <original>D</original>
    <variation>A</variation>
    <variation>E</variation>
    <location>
        <position position="224"/>
    </location>
</feature>
<feature type="mutagenesis site" description="Decreases over 50% Km for Li(+), without affecting Km for Na(+)." evidence="3">
    <original>E</original>
    <variation>K</variation>
    <location>
        <position position="229"/>
    </location>
</feature>
<feature type="mutagenesis site" description="Lack of activity." evidence="3">
    <original>R</original>
    <variation>A</variation>
    <location>
        <position position="325"/>
    </location>
</feature>
<evidence type="ECO:0000255" key="1"/>
<evidence type="ECO:0000269" key="2">
    <source>
    </source>
</evidence>
<evidence type="ECO:0000269" key="3">
    <source>
    </source>
</evidence>
<evidence type="ECO:0000305" key="4"/>